<name>PCP_STRP1</name>
<reference key="1">
    <citation type="journal article" date="2001" name="Proc. Natl. Acad. Sci. U.S.A.">
        <title>Complete genome sequence of an M1 strain of Streptococcus pyogenes.</title>
        <authorList>
            <person name="Ferretti J.J."/>
            <person name="McShan W.M."/>
            <person name="Ajdic D.J."/>
            <person name="Savic D.J."/>
            <person name="Savic G."/>
            <person name="Lyon K."/>
            <person name="Primeaux C."/>
            <person name="Sezate S."/>
            <person name="Suvorov A.N."/>
            <person name="Kenton S."/>
            <person name="Lai H.S."/>
            <person name="Lin S.P."/>
            <person name="Qian Y."/>
            <person name="Jia H.G."/>
            <person name="Najar F.Z."/>
            <person name="Ren Q."/>
            <person name="Zhu H."/>
            <person name="Song L."/>
            <person name="White J."/>
            <person name="Yuan X."/>
            <person name="Clifton S.W."/>
            <person name="Roe B.A."/>
            <person name="McLaughlin R.E."/>
        </authorList>
    </citation>
    <scope>NUCLEOTIDE SEQUENCE [LARGE SCALE GENOMIC DNA]</scope>
    <source>
        <strain>ATCC 700294 / SF370 / Serotype M1</strain>
    </source>
</reference>
<reference key="2">
    <citation type="journal article" date="2005" name="J. Infect. Dis.">
        <title>Evolutionary origin and emergence of a highly successful clone of serotype M1 group A Streptococcus involved multiple horizontal gene transfer events.</title>
        <authorList>
            <person name="Sumby P."/>
            <person name="Porcella S.F."/>
            <person name="Madrigal A.G."/>
            <person name="Barbian K.D."/>
            <person name="Virtaneva K."/>
            <person name="Ricklefs S.M."/>
            <person name="Sturdevant D.E."/>
            <person name="Graham M.R."/>
            <person name="Vuopio-Varkila J."/>
            <person name="Hoe N.P."/>
            <person name="Musser J.M."/>
        </authorList>
    </citation>
    <scope>NUCLEOTIDE SEQUENCE [LARGE SCALE GENOMIC DNA]</scope>
    <source>
        <strain>ATCC BAA-947 / MGAS5005 / Serotype M1</strain>
    </source>
</reference>
<gene>
    <name type="primary">pcp</name>
    <name type="ordered locus">SPy_0506</name>
    <name type="ordered locus">M5005_Spy0417</name>
</gene>
<keyword id="KW-0963">Cytoplasm</keyword>
<keyword id="KW-0378">Hydrolase</keyword>
<keyword id="KW-0645">Protease</keyword>
<keyword id="KW-1185">Reference proteome</keyword>
<keyword id="KW-0788">Thiol protease</keyword>
<accession>P68896</accession>
<accession>Q01328</accession>
<accession>Q490D3</accession>
<dbReference type="EC" id="3.4.19.3"/>
<dbReference type="EMBL" id="AE004092">
    <property type="protein sequence ID" value="AAK33506.1"/>
    <property type="molecule type" value="Genomic_DNA"/>
</dbReference>
<dbReference type="EMBL" id="CP000017">
    <property type="protein sequence ID" value="AAZ51035.1"/>
    <property type="molecule type" value="Genomic_DNA"/>
</dbReference>
<dbReference type="RefSeq" id="NP_268785.1">
    <property type="nucleotide sequence ID" value="NC_002737.2"/>
</dbReference>
<dbReference type="SMR" id="P68896"/>
<dbReference type="MEROPS" id="C15.001"/>
<dbReference type="PaxDb" id="1314-HKU360_00440"/>
<dbReference type="KEGG" id="spy:SPy_0506"/>
<dbReference type="KEGG" id="spz:M5005_Spy0417"/>
<dbReference type="PATRIC" id="fig|160490.10.peg.432"/>
<dbReference type="HOGENOM" id="CLU_043960_4_0_9"/>
<dbReference type="OMA" id="VCNHVFY"/>
<dbReference type="Proteomes" id="UP000000750">
    <property type="component" value="Chromosome"/>
</dbReference>
<dbReference type="GO" id="GO:0005829">
    <property type="term" value="C:cytosol"/>
    <property type="evidence" value="ECO:0007669"/>
    <property type="project" value="InterPro"/>
</dbReference>
<dbReference type="GO" id="GO:0016920">
    <property type="term" value="F:pyroglutamyl-peptidase activity"/>
    <property type="evidence" value="ECO:0007669"/>
    <property type="project" value="UniProtKB-UniRule"/>
</dbReference>
<dbReference type="GO" id="GO:0006508">
    <property type="term" value="P:proteolysis"/>
    <property type="evidence" value="ECO:0007669"/>
    <property type="project" value="UniProtKB-KW"/>
</dbReference>
<dbReference type="CDD" id="cd00501">
    <property type="entry name" value="Peptidase_C15"/>
    <property type="match status" value="1"/>
</dbReference>
<dbReference type="FunFam" id="3.40.630.20:FF:000001">
    <property type="entry name" value="Pyrrolidone-carboxylate peptidase"/>
    <property type="match status" value="1"/>
</dbReference>
<dbReference type="Gene3D" id="3.40.630.20">
    <property type="entry name" value="Peptidase C15, pyroglutamyl peptidase I-like"/>
    <property type="match status" value="1"/>
</dbReference>
<dbReference type="HAMAP" id="MF_00417">
    <property type="entry name" value="Pyrrolid_peptidase"/>
    <property type="match status" value="1"/>
</dbReference>
<dbReference type="InterPro" id="IPR000816">
    <property type="entry name" value="Peptidase_C15"/>
</dbReference>
<dbReference type="InterPro" id="IPR016125">
    <property type="entry name" value="Peptidase_C15-like"/>
</dbReference>
<dbReference type="InterPro" id="IPR036440">
    <property type="entry name" value="Peptidase_C15-like_sf"/>
</dbReference>
<dbReference type="InterPro" id="IPR029762">
    <property type="entry name" value="PGP-I_bact-type"/>
</dbReference>
<dbReference type="InterPro" id="IPR033694">
    <property type="entry name" value="PGPEP1_Cys_AS"/>
</dbReference>
<dbReference type="InterPro" id="IPR033693">
    <property type="entry name" value="PGPEP1_Glu_AS"/>
</dbReference>
<dbReference type="NCBIfam" id="NF009676">
    <property type="entry name" value="PRK13197.1"/>
    <property type="match status" value="1"/>
</dbReference>
<dbReference type="NCBIfam" id="TIGR00504">
    <property type="entry name" value="pyro_pdase"/>
    <property type="match status" value="1"/>
</dbReference>
<dbReference type="PANTHER" id="PTHR23402">
    <property type="entry name" value="PROTEASE FAMILY C15 PYROGLUTAMYL-PEPTIDASE I-RELATED"/>
    <property type="match status" value="1"/>
</dbReference>
<dbReference type="PANTHER" id="PTHR23402:SF1">
    <property type="entry name" value="PYROGLUTAMYL-PEPTIDASE I"/>
    <property type="match status" value="1"/>
</dbReference>
<dbReference type="Pfam" id="PF01470">
    <property type="entry name" value="Peptidase_C15"/>
    <property type="match status" value="1"/>
</dbReference>
<dbReference type="PIRSF" id="PIRSF015592">
    <property type="entry name" value="Prld-crbxl_pptds"/>
    <property type="match status" value="1"/>
</dbReference>
<dbReference type="PRINTS" id="PR00706">
    <property type="entry name" value="PYROGLUPTASE"/>
</dbReference>
<dbReference type="SUPFAM" id="SSF53182">
    <property type="entry name" value="Pyrrolidone carboxyl peptidase (pyroglutamate aminopeptidase)"/>
    <property type="match status" value="1"/>
</dbReference>
<dbReference type="PROSITE" id="PS01334">
    <property type="entry name" value="PYRASE_CYS"/>
    <property type="match status" value="1"/>
</dbReference>
<dbReference type="PROSITE" id="PS01333">
    <property type="entry name" value="PYRASE_GLU"/>
    <property type="match status" value="1"/>
</dbReference>
<comment type="function">
    <text evidence="1">Removes 5-oxoproline from various penultimate amino acid residues except L-proline.</text>
</comment>
<comment type="catalytic activity">
    <reaction>
        <text>Release of an N-terminal pyroglutamyl group from a polypeptide, the second amino acid generally not being Pro.</text>
        <dbReference type="EC" id="3.4.19.3"/>
    </reaction>
</comment>
<comment type="subunit">
    <text evidence="1">Homotetramer.</text>
</comment>
<comment type="subcellular location">
    <subcellularLocation>
        <location evidence="1">Cytoplasm</location>
    </subcellularLocation>
</comment>
<comment type="similarity">
    <text evidence="2">Belongs to the peptidase C15 family.</text>
</comment>
<sequence length="215" mass="23132">MKILVTGFDPFGGEAINPALEAIKKLPATIHGAEIKCIEVPTVFQKSADVLQQHIESFQPDAVLCIGQAGGRTGLTPERVAINQDDARIPDNEGNQPIDTPIRADGKAAYFSTLPIKAMVAAIHQAGLPASVSNTAGTFVCNHLMYQALYLVDKYCPNAKAGFMHIPFMMEQVVDKPNTAAMNLDDITRGIEAAIFAIVDFKDRSDLKRVGGATH</sequence>
<proteinExistence type="inferred from homology"/>
<feature type="chain" id="PRO_0000184742" description="Pyrrolidone-carboxylate peptidase">
    <location>
        <begin position="1"/>
        <end position="215"/>
    </location>
</feature>
<feature type="active site" evidence="1">
    <location>
        <position position="78"/>
    </location>
</feature>
<feature type="active site" evidence="1">
    <location>
        <position position="141"/>
    </location>
</feature>
<feature type="active site" evidence="1">
    <location>
        <position position="165"/>
    </location>
</feature>
<organism>
    <name type="scientific">Streptococcus pyogenes serotype M1</name>
    <dbReference type="NCBI Taxonomy" id="301447"/>
    <lineage>
        <taxon>Bacteria</taxon>
        <taxon>Bacillati</taxon>
        <taxon>Bacillota</taxon>
        <taxon>Bacilli</taxon>
        <taxon>Lactobacillales</taxon>
        <taxon>Streptococcaceae</taxon>
        <taxon>Streptococcus</taxon>
    </lineage>
</organism>
<evidence type="ECO:0000250" key="1"/>
<evidence type="ECO:0000305" key="2"/>
<protein>
    <recommendedName>
        <fullName>Pyrrolidone-carboxylate peptidase</fullName>
        <ecNumber>3.4.19.3</ecNumber>
    </recommendedName>
    <alternativeName>
        <fullName>5-oxoprolyl-peptidase</fullName>
    </alternativeName>
    <alternativeName>
        <fullName>Pyroglutamyl-peptidase I</fullName>
        <shortName>PGP-I</shortName>
        <shortName>Pyrase</shortName>
    </alternativeName>
</protein>